<gene>
    <name evidence="1" type="primary">mraZ</name>
    <name type="ordered locus">Daro_3507</name>
</gene>
<protein>
    <recommendedName>
        <fullName>Transcriptional regulator MraZ</fullName>
    </recommendedName>
</protein>
<feature type="chain" id="PRO_0000230083" description="Transcriptional regulator MraZ">
    <location>
        <begin position="1"/>
        <end position="148"/>
    </location>
</feature>
<feature type="domain" description="SpoVT-AbrB 1" evidence="2">
    <location>
        <begin position="5"/>
        <end position="51"/>
    </location>
</feature>
<feature type="domain" description="SpoVT-AbrB 2" evidence="2">
    <location>
        <begin position="80"/>
        <end position="123"/>
    </location>
</feature>
<name>MRAZ_DECAR</name>
<accession>Q47A95</accession>
<reference key="1">
    <citation type="journal article" date="2009" name="BMC Genomics">
        <title>Metabolic analysis of the soil microbe Dechloromonas aromatica str. RCB: indications of a surprisingly complex life-style and cryptic anaerobic pathways for aromatic degradation.</title>
        <authorList>
            <person name="Salinero K.K."/>
            <person name="Keller K."/>
            <person name="Feil W.S."/>
            <person name="Feil H."/>
            <person name="Trong S."/>
            <person name="Di Bartolo G."/>
            <person name="Lapidus A."/>
        </authorList>
    </citation>
    <scope>NUCLEOTIDE SEQUENCE [LARGE SCALE GENOMIC DNA]</scope>
    <source>
        <strain>RCB</strain>
    </source>
</reference>
<dbReference type="EMBL" id="CP000089">
    <property type="protein sequence ID" value="AAZ48236.1"/>
    <property type="molecule type" value="Genomic_DNA"/>
</dbReference>
<dbReference type="SMR" id="Q47A95"/>
<dbReference type="STRING" id="159087.Daro_3507"/>
<dbReference type="KEGG" id="dar:Daro_3507"/>
<dbReference type="eggNOG" id="COG2001">
    <property type="taxonomic scope" value="Bacteria"/>
</dbReference>
<dbReference type="HOGENOM" id="CLU_107907_2_0_4"/>
<dbReference type="OrthoDB" id="9807753at2"/>
<dbReference type="GO" id="GO:0005737">
    <property type="term" value="C:cytoplasm"/>
    <property type="evidence" value="ECO:0007669"/>
    <property type="project" value="UniProtKB-UniRule"/>
</dbReference>
<dbReference type="GO" id="GO:0009295">
    <property type="term" value="C:nucleoid"/>
    <property type="evidence" value="ECO:0007669"/>
    <property type="project" value="UniProtKB-SubCell"/>
</dbReference>
<dbReference type="GO" id="GO:0003700">
    <property type="term" value="F:DNA-binding transcription factor activity"/>
    <property type="evidence" value="ECO:0007669"/>
    <property type="project" value="UniProtKB-UniRule"/>
</dbReference>
<dbReference type="GO" id="GO:0000976">
    <property type="term" value="F:transcription cis-regulatory region binding"/>
    <property type="evidence" value="ECO:0007669"/>
    <property type="project" value="TreeGrafter"/>
</dbReference>
<dbReference type="GO" id="GO:2000143">
    <property type="term" value="P:negative regulation of DNA-templated transcription initiation"/>
    <property type="evidence" value="ECO:0007669"/>
    <property type="project" value="TreeGrafter"/>
</dbReference>
<dbReference type="CDD" id="cd16321">
    <property type="entry name" value="MraZ_C"/>
    <property type="match status" value="1"/>
</dbReference>
<dbReference type="CDD" id="cd16320">
    <property type="entry name" value="MraZ_N"/>
    <property type="match status" value="1"/>
</dbReference>
<dbReference type="Gene3D" id="3.40.1550.20">
    <property type="entry name" value="Transcriptional regulator MraZ domain"/>
    <property type="match status" value="1"/>
</dbReference>
<dbReference type="HAMAP" id="MF_01008">
    <property type="entry name" value="MraZ"/>
    <property type="match status" value="1"/>
</dbReference>
<dbReference type="InterPro" id="IPR003444">
    <property type="entry name" value="MraZ"/>
</dbReference>
<dbReference type="InterPro" id="IPR035644">
    <property type="entry name" value="MraZ_C"/>
</dbReference>
<dbReference type="InterPro" id="IPR020603">
    <property type="entry name" value="MraZ_dom"/>
</dbReference>
<dbReference type="InterPro" id="IPR035642">
    <property type="entry name" value="MraZ_N"/>
</dbReference>
<dbReference type="InterPro" id="IPR038619">
    <property type="entry name" value="MraZ_sf"/>
</dbReference>
<dbReference type="InterPro" id="IPR007159">
    <property type="entry name" value="SpoVT-AbrB_dom"/>
</dbReference>
<dbReference type="InterPro" id="IPR037914">
    <property type="entry name" value="SpoVT-AbrB_sf"/>
</dbReference>
<dbReference type="NCBIfam" id="TIGR00242">
    <property type="entry name" value="division/cell wall cluster transcriptional repressor MraZ"/>
    <property type="match status" value="1"/>
</dbReference>
<dbReference type="PANTHER" id="PTHR34701">
    <property type="entry name" value="TRANSCRIPTIONAL REGULATOR MRAZ"/>
    <property type="match status" value="1"/>
</dbReference>
<dbReference type="PANTHER" id="PTHR34701:SF1">
    <property type="entry name" value="TRANSCRIPTIONAL REGULATOR MRAZ"/>
    <property type="match status" value="1"/>
</dbReference>
<dbReference type="Pfam" id="PF02381">
    <property type="entry name" value="MraZ"/>
    <property type="match status" value="2"/>
</dbReference>
<dbReference type="SUPFAM" id="SSF89447">
    <property type="entry name" value="AbrB/MazE/MraZ-like"/>
    <property type="match status" value="1"/>
</dbReference>
<dbReference type="PROSITE" id="PS51740">
    <property type="entry name" value="SPOVT_ABRB"/>
    <property type="match status" value="2"/>
</dbReference>
<comment type="subunit">
    <text evidence="1">Forms oligomers.</text>
</comment>
<comment type="subcellular location">
    <subcellularLocation>
        <location evidence="1">Cytoplasm</location>
        <location evidence="1">Nucleoid</location>
    </subcellularLocation>
</comment>
<comment type="similarity">
    <text evidence="1">Belongs to the MraZ family.</text>
</comment>
<sequence>MFEGAAALNLDAKGRLAIPARHRDALLAASEGSLVLTAHPHRCLLLYPSPAWQPIRDQILKASSLDPRAASIKRVLVGNARTEEPDSAGRILIAPELREYAKFEKTVYLVGMGTHFEIWSEAGWKQQNDLAAEALSGDLPPGFGDLVL</sequence>
<proteinExistence type="inferred from homology"/>
<evidence type="ECO:0000255" key="1">
    <source>
        <dbReference type="HAMAP-Rule" id="MF_01008"/>
    </source>
</evidence>
<evidence type="ECO:0000255" key="2">
    <source>
        <dbReference type="PROSITE-ProRule" id="PRU01076"/>
    </source>
</evidence>
<keyword id="KW-0963">Cytoplasm</keyword>
<keyword id="KW-0238">DNA-binding</keyword>
<keyword id="KW-0677">Repeat</keyword>
<keyword id="KW-0804">Transcription</keyword>
<keyword id="KW-0805">Transcription regulation</keyword>
<organism>
    <name type="scientific">Dechloromonas aromatica (strain RCB)</name>
    <dbReference type="NCBI Taxonomy" id="159087"/>
    <lineage>
        <taxon>Bacteria</taxon>
        <taxon>Pseudomonadati</taxon>
        <taxon>Pseudomonadota</taxon>
        <taxon>Betaproteobacteria</taxon>
        <taxon>Rhodocyclales</taxon>
        <taxon>Azonexaceae</taxon>
        <taxon>Dechloromonas</taxon>
    </lineage>
</organism>